<feature type="chain" id="PRO_0000358784" description="Transcription factor bHLH93">
    <location>
        <begin position="1"/>
        <end position="351"/>
    </location>
</feature>
<feature type="domain" description="bHLH" evidence="1">
    <location>
        <begin position="174"/>
        <end position="223"/>
    </location>
</feature>
<feature type="splice variant" id="VSP_036094" description="In isoform 2." evidence="3">
    <original>FEIDRRDEDTRVDICCSPKPGLLLSTVNTLETLGLEIEQCVISCFSDFSLQASCSEGAEQRDFITSEDIKQALFRNAGYGGSC</original>
    <variation>IVETRILELIYAARQNRDCYYL</variation>
    <location>
        <begin position="268"/>
        <end position="350"/>
    </location>
</feature>
<keyword id="KW-0025">Alternative splicing</keyword>
<keyword id="KW-0217">Developmental protein</keyword>
<keyword id="KW-0238">DNA-binding</keyword>
<keyword id="KW-0539">Nucleus</keyword>
<keyword id="KW-1185">Reference proteome</keyword>
<keyword id="KW-0804">Transcription</keyword>
<keyword id="KW-0805">Transcription regulation</keyword>
<protein>
    <recommendedName>
        <fullName>Transcription factor bHLH93</fullName>
    </recommendedName>
    <alternativeName>
        <fullName>Basic helix-loop-helix protein 93</fullName>
        <shortName>AtbHLH93</shortName>
        <shortName>bHLH 93</shortName>
    </alternativeName>
    <alternativeName>
        <fullName>Transcription factor EN 47</fullName>
    </alternativeName>
    <alternativeName>
        <fullName>bHLH transcription factor bHLH093</fullName>
    </alternativeName>
</protein>
<proteinExistence type="evidence at protein level"/>
<sequence length="351" mass="39484">MELSTQMNVFEELLVPTKQETTDNNINNLSFNGGFDHHHHQFFPNGYNIDYLCFNNEEEDENTLLYPSSFMDLISQPPPLLLHQPPPLQPLSPPLSSSATAGATFDYPFLEALQEIIDSSSSSPPLILQNGQEENFNNPMSYPSPLMESDQSKSFSVGYCGGETNKKKSKKLEGQPSKNLMAERRRRKRLNDRLSMLRSIVPKISKMDRTSILGDAIDYMKELLDKINKLQDEEQELGNSNNSHHSKLFGDLKDLNANEPLVRNSPKFEIDRRDEDTRVDICCSPKPGLLLSTVNTLETLGLEIEQCVISCFSDFSLQASCSEGAEQRDFITSEDIKQALFRNAGYGGSCL</sequence>
<name>BH093_ARATH</name>
<accession>Q9LSL1</accession>
<accession>Q0WPP5</accession>
<accession>Q8LEZ5</accession>
<gene>
    <name type="primary">BHLH93</name>
    <name type="synonym">EN47</name>
    <name type="ordered locus">At5g65640</name>
    <name type="ORF">K21L13.16</name>
</gene>
<dbReference type="EMBL" id="AF488621">
    <property type="status" value="NOT_ANNOTATED_CDS"/>
    <property type="molecule type" value="mRNA"/>
</dbReference>
<dbReference type="EMBL" id="AB026639">
    <property type="protein sequence ID" value="BAA98183.1"/>
    <property type="molecule type" value="Genomic_DNA"/>
</dbReference>
<dbReference type="EMBL" id="CP002688">
    <property type="protein sequence ID" value="AED98080.1"/>
    <property type="molecule type" value="Genomic_DNA"/>
</dbReference>
<dbReference type="EMBL" id="CP002688">
    <property type="protein sequence ID" value="AED98081.1"/>
    <property type="molecule type" value="Genomic_DNA"/>
</dbReference>
<dbReference type="EMBL" id="BT025665">
    <property type="protein sequence ID" value="ABF74726.1"/>
    <property type="molecule type" value="mRNA"/>
</dbReference>
<dbReference type="EMBL" id="AK229018">
    <property type="protein sequence ID" value="BAF00904.1"/>
    <property type="molecule type" value="mRNA"/>
</dbReference>
<dbReference type="EMBL" id="AY085134">
    <property type="protein sequence ID" value="AAM61687.1"/>
    <property type="molecule type" value="mRNA"/>
</dbReference>
<dbReference type="RefSeq" id="NP_001078801.1">
    <molecule id="Q9LSL1-2"/>
    <property type="nucleotide sequence ID" value="NM_001085332.2"/>
</dbReference>
<dbReference type="RefSeq" id="NP_569014.1">
    <molecule id="Q9LSL1-1"/>
    <property type="nucleotide sequence ID" value="NM_125962.4"/>
</dbReference>
<dbReference type="SMR" id="Q9LSL1"/>
<dbReference type="BioGRID" id="21932">
    <property type="interactions" value="1"/>
</dbReference>
<dbReference type="FunCoup" id="Q9LSL1">
    <property type="interactions" value="184"/>
</dbReference>
<dbReference type="IntAct" id="Q9LSL1">
    <property type="interactions" value="2"/>
</dbReference>
<dbReference type="STRING" id="3702.Q9LSL1"/>
<dbReference type="PaxDb" id="3702-AT5G65640.1"/>
<dbReference type="ProteomicsDB" id="240835">
    <molecule id="Q9LSL1-1"/>
</dbReference>
<dbReference type="EnsemblPlants" id="AT5G65640.1">
    <molecule id="Q9LSL1-1"/>
    <property type="protein sequence ID" value="AT5G65640.1"/>
    <property type="gene ID" value="AT5G65640"/>
</dbReference>
<dbReference type="EnsemblPlants" id="AT5G65640.2">
    <molecule id="Q9LSL1-2"/>
    <property type="protein sequence ID" value="AT5G65640.2"/>
    <property type="gene ID" value="AT5G65640"/>
</dbReference>
<dbReference type="GeneID" id="836690"/>
<dbReference type="Gramene" id="AT5G65640.1">
    <molecule id="Q9LSL1-1"/>
    <property type="protein sequence ID" value="AT5G65640.1"/>
    <property type="gene ID" value="AT5G65640"/>
</dbReference>
<dbReference type="Gramene" id="AT5G65640.2">
    <molecule id="Q9LSL1-2"/>
    <property type="protein sequence ID" value="AT5G65640.2"/>
    <property type="gene ID" value="AT5G65640"/>
</dbReference>
<dbReference type="KEGG" id="ath:AT5G65640"/>
<dbReference type="Araport" id="AT5G65640"/>
<dbReference type="TAIR" id="AT5G65640">
    <property type="gene designation" value="BHLH093"/>
</dbReference>
<dbReference type="eggNOG" id="ENOG502QQHH">
    <property type="taxonomic scope" value="Eukaryota"/>
</dbReference>
<dbReference type="HOGENOM" id="CLU_035660_1_0_1"/>
<dbReference type="InParanoid" id="Q9LSL1"/>
<dbReference type="OMA" id="DTRVDIC"/>
<dbReference type="PhylomeDB" id="Q9LSL1"/>
<dbReference type="PRO" id="PR:Q9LSL1"/>
<dbReference type="Proteomes" id="UP000006548">
    <property type="component" value="Chromosome 5"/>
</dbReference>
<dbReference type="ExpressionAtlas" id="Q9LSL1">
    <property type="expression patterns" value="baseline and differential"/>
</dbReference>
<dbReference type="GO" id="GO:0005634">
    <property type="term" value="C:nucleus"/>
    <property type="evidence" value="ECO:0000314"/>
    <property type="project" value="TAIR"/>
</dbReference>
<dbReference type="GO" id="GO:0003677">
    <property type="term" value="F:DNA binding"/>
    <property type="evidence" value="ECO:0007669"/>
    <property type="project" value="UniProtKB-KW"/>
</dbReference>
<dbReference type="GO" id="GO:0003700">
    <property type="term" value="F:DNA-binding transcription factor activity"/>
    <property type="evidence" value="ECO:0000250"/>
    <property type="project" value="TAIR"/>
</dbReference>
<dbReference type="GO" id="GO:0046983">
    <property type="term" value="F:protein dimerization activity"/>
    <property type="evidence" value="ECO:0007669"/>
    <property type="project" value="InterPro"/>
</dbReference>
<dbReference type="GO" id="GO:0045487">
    <property type="term" value="P:gibberellin catabolic process"/>
    <property type="evidence" value="ECO:0000315"/>
    <property type="project" value="TAIR"/>
</dbReference>
<dbReference type="GO" id="GO:0010371">
    <property type="term" value="P:regulation of gibberellin biosynthetic process"/>
    <property type="evidence" value="ECO:0000315"/>
    <property type="project" value="TAIR"/>
</dbReference>
<dbReference type="CDD" id="cd11443">
    <property type="entry name" value="bHLH_AtAMS_like"/>
    <property type="match status" value="1"/>
</dbReference>
<dbReference type="FunFam" id="4.10.280.10:FF:000066">
    <property type="entry name" value="BHLH transcription factor"/>
    <property type="match status" value="1"/>
</dbReference>
<dbReference type="Gene3D" id="4.10.280.10">
    <property type="entry name" value="Helix-loop-helix DNA-binding domain"/>
    <property type="match status" value="1"/>
</dbReference>
<dbReference type="InterPro" id="IPR054502">
    <property type="entry name" value="bHLH-TF_ACT-like_plant"/>
</dbReference>
<dbReference type="InterPro" id="IPR011598">
    <property type="entry name" value="bHLH_dom"/>
</dbReference>
<dbReference type="InterPro" id="IPR036638">
    <property type="entry name" value="HLH_DNA-bd_sf"/>
</dbReference>
<dbReference type="InterPro" id="IPR051358">
    <property type="entry name" value="TF_AMS/ICE1/BHLH6-like"/>
</dbReference>
<dbReference type="PANTHER" id="PTHR31945:SF15">
    <property type="entry name" value="TRANSCRIPTION FACTOR BHLH61-RELATED"/>
    <property type="match status" value="1"/>
</dbReference>
<dbReference type="PANTHER" id="PTHR31945">
    <property type="entry name" value="TRANSCRIPTION FACTOR SCREAM2-RELATED"/>
    <property type="match status" value="1"/>
</dbReference>
<dbReference type="Pfam" id="PF22754">
    <property type="entry name" value="bHLH-TF_ACT-like_plant"/>
    <property type="match status" value="1"/>
</dbReference>
<dbReference type="Pfam" id="PF00010">
    <property type="entry name" value="HLH"/>
    <property type="match status" value="1"/>
</dbReference>
<dbReference type="SMART" id="SM00353">
    <property type="entry name" value="HLH"/>
    <property type="match status" value="1"/>
</dbReference>
<dbReference type="SUPFAM" id="SSF47459">
    <property type="entry name" value="HLH, helix-loop-helix DNA-binding domain"/>
    <property type="match status" value="1"/>
</dbReference>
<dbReference type="PROSITE" id="PS50888">
    <property type="entry name" value="BHLH"/>
    <property type="match status" value="1"/>
</dbReference>
<organism>
    <name type="scientific">Arabidopsis thaliana</name>
    <name type="common">Mouse-ear cress</name>
    <dbReference type="NCBI Taxonomy" id="3702"/>
    <lineage>
        <taxon>Eukaryota</taxon>
        <taxon>Viridiplantae</taxon>
        <taxon>Streptophyta</taxon>
        <taxon>Embryophyta</taxon>
        <taxon>Tracheophyta</taxon>
        <taxon>Spermatophyta</taxon>
        <taxon>Magnoliopsida</taxon>
        <taxon>eudicotyledons</taxon>
        <taxon>Gunneridae</taxon>
        <taxon>Pentapetalae</taxon>
        <taxon>rosids</taxon>
        <taxon>malvids</taxon>
        <taxon>Brassicales</taxon>
        <taxon>Brassicaceae</taxon>
        <taxon>Camelineae</taxon>
        <taxon>Arabidopsis</taxon>
    </lineage>
</organism>
<evidence type="ECO:0000255" key="1">
    <source>
        <dbReference type="PROSITE-ProRule" id="PRU00981"/>
    </source>
</evidence>
<evidence type="ECO:0000269" key="2">
    <source>
    </source>
</evidence>
<evidence type="ECO:0000303" key="3">
    <source ref="5"/>
</evidence>
<evidence type="ECO:0000305" key="4"/>
<comment type="function">
    <text evidence="2">Transcription factor. May be involved in the differentiation of stomatal guard cells.</text>
</comment>
<comment type="subunit">
    <text evidence="2 4">Homodimer (Probable). Interacts with FAMA.</text>
</comment>
<comment type="subcellular location">
    <subcellularLocation>
        <location evidence="4">Nucleus</location>
    </subcellularLocation>
</comment>
<comment type="alternative products">
    <event type="alternative splicing"/>
    <isoform>
        <id>Q9LSL1-1</id>
        <name>1</name>
        <sequence type="displayed"/>
    </isoform>
    <isoform>
        <id>Q9LSL1-2</id>
        <name>2</name>
        <sequence type="described" ref="VSP_036094"/>
    </isoform>
</comment>
<comment type="tissue specificity">
    <text evidence="2">Broadly expressed.</text>
</comment>
<comment type="sequence caution" evidence="4">
    <conflict type="miscellaneous discrepancy">
        <sequence resource="EMBL" id="AF488621"/>
    </conflict>
    <text>Sequencing errors.</text>
</comment>
<reference key="1">
    <citation type="journal article" date="2003" name="Mol. Biol. Evol.">
        <title>The basic helix-loop-helix transcription factor family in plants: a genome-wide study of protein structure and functional diversity.</title>
        <authorList>
            <person name="Heim M.A."/>
            <person name="Jakoby M."/>
            <person name="Werber M."/>
            <person name="Martin C."/>
            <person name="Weisshaar B."/>
            <person name="Bailey P.C."/>
        </authorList>
    </citation>
    <scope>NUCLEOTIDE SEQUENCE [MRNA]</scope>
    <scope>GENE FAMILY</scope>
    <scope>NOMENCLATURE</scope>
    <source>
        <strain>cv. Columbia</strain>
    </source>
</reference>
<reference key="2">
    <citation type="submission" date="1999-04" db="EMBL/GenBank/DDBJ databases">
        <title>Structural analysis of Arabidopsis thaliana chromosome 5. XI.</title>
        <authorList>
            <person name="Kaneko T."/>
            <person name="Katoh T."/>
            <person name="Asamizu E."/>
            <person name="Sato S."/>
            <person name="Nakamura Y."/>
            <person name="Kotani H."/>
            <person name="Tabata S."/>
        </authorList>
    </citation>
    <scope>NUCLEOTIDE SEQUENCE [LARGE SCALE GENOMIC DNA]</scope>
    <source>
        <strain>cv. Columbia</strain>
    </source>
</reference>
<reference key="3">
    <citation type="journal article" date="2017" name="Plant J.">
        <title>Araport11: a complete reannotation of the Arabidopsis thaliana reference genome.</title>
        <authorList>
            <person name="Cheng C.Y."/>
            <person name="Krishnakumar V."/>
            <person name="Chan A.P."/>
            <person name="Thibaud-Nissen F."/>
            <person name="Schobel S."/>
            <person name="Town C.D."/>
        </authorList>
    </citation>
    <scope>GENOME REANNOTATION</scope>
    <source>
        <strain>cv. Columbia</strain>
    </source>
</reference>
<reference key="4">
    <citation type="submission" date="2006-06" db="EMBL/GenBank/DDBJ databases">
        <title>Arabidopsis ORF clones.</title>
        <authorList>
            <person name="Shinn P."/>
            <person name="Chen H."/>
            <person name="Kim C.J."/>
            <person name="Quinitio C."/>
            <person name="Ecker J.R."/>
        </authorList>
    </citation>
    <scope>NUCLEOTIDE SEQUENCE [LARGE SCALE MRNA] (ISOFORM 1)</scope>
    <source>
        <strain>cv. Columbia</strain>
    </source>
</reference>
<reference key="5">
    <citation type="submission" date="2006-07" db="EMBL/GenBank/DDBJ databases">
        <title>Large-scale analysis of RIKEN Arabidopsis full-length (RAFL) cDNAs.</title>
        <authorList>
            <person name="Totoki Y."/>
            <person name="Seki M."/>
            <person name="Ishida J."/>
            <person name="Nakajima M."/>
            <person name="Enju A."/>
            <person name="Kamiya A."/>
            <person name="Narusaka M."/>
            <person name="Shin-i T."/>
            <person name="Nakagawa M."/>
            <person name="Sakamoto N."/>
            <person name="Oishi K."/>
            <person name="Kohara Y."/>
            <person name="Kobayashi M."/>
            <person name="Toyoda A."/>
            <person name="Sakaki Y."/>
            <person name="Sakurai T."/>
            <person name="Iida K."/>
            <person name="Akiyama K."/>
            <person name="Satou M."/>
            <person name="Toyoda T."/>
            <person name="Konagaya A."/>
            <person name="Carninci P."/>
            <person name="Kawai J."/>
            <person name="Hayashizaki Y."/>
            <person name="Shinozaki K."/>
        </authorList>
    </citation>
    <scope>NUCLEOTIDE SEQUENCE [LARGE SCALE MRNA] (ISOFORM 2)</scope>
    <source>
        <strain>cv. Columbia</strain>
    </source>
</reference>
<reference key="6">
    <citation type="submission" date="2002-03" db="EMBL/GenBank/DDBJ databases">
        <title>Full-length cDNA from Arabidopsis thaliana.</title>
        <authorList>
            <person name="Brover V.V."/>
            <person name="Troukhan M.E."/>
            <person name="Alexandrov N.A."/>
            <person name="Lu Y.-P."/>
            <person name="Flavell R.B."/>
            <person name="Feldmann K.A."/>
        </authorList>
    </citation>
    <scope>NUCLEOTIDE SEQUENCE [LARGE SCALE MRNA] (ISOFORM 1)</scope>
</reference>
<reference key="7">
    <citation type="journal article" date="2003" name="Plant Cell">
        <title>The Arabidopsis basic/helix-loop-helix transcription factor family.</title>
        <authorList>
            <person name="Toledo-Ortiz G."/>
            <person name="Huq E."/>
            <person name="Quail P.H."/>
        </authorList>
    </citation>
    <scope>GENE FAMILY</scope>
</reference>
<reference key="8">
    <citation type="journal article" date="2003" name="Plant Cell">
        <title>Update on the basic helix-loop-helix transcription factor gene family in Arabidopsis thaliana.</title>
        <authorList>
            <person name="Bailey P.C."/>
            <person name="Martin C."/>
            <person name="Toledo-Ortiz G."/>
            <person name="Quail P.H."/>
            <person name="Huq E."/>
            <person name="Heim M.A."/>
            <person name="Jakoby M."/>
            <person name="Werber M."/>
            <person name="Weisshaar B."/>
        </authorList>
    </citation>
    <scope>GENE FAMILY</scope>
    <scope>NOMENCLATURE</scope>
</reference>
<reference key="9">
    <citation type="journal article" date="2006" name="Plant Cell">
        <title>Arabidopsis FAMA controls the final proliferation/differentiation switch during stomatal development.</title>
        <authorList>
            <person name="Ohashi-Ito K."/>
            <person name="Bergmann D.C."/>
        </authorList>
    </citation>
    <scope>FUNCTION</scope>
    <scope>INTERACTION WITH FAMA</scope>
    <scope>TISSUE SPECIFICITY</scope>
</reference>